<keyword id="KW-0028">Amino-acid biosynthesis</keyword>
<keyword id="KW-0963">Cytoplasm</keyword>
<keyword id="KW-0368">Histidine biosynthesis</keyword>
<keyword id="KW-0413">Isomerase</keyword>
<keyword id="KW-1185">Reference proteome</keyword>
<comment type="catalytic activity">
    <reaction evidence="1">
        <text>1-(5-phospho-beta-D-ribosyl)-5-[(5-phospho-beta-D-ribosylamino)methylideneamino]imidazole-4-carboxamide = 5-[(5-phospho-1-deoxy-D-ribulos-1-ylimino)methylamino]-1-(5-phospho-beta-D-ribosyl)imidazole-4-carboxamide</text>
        <dbReference type="Rhea" id="RHEA:15469"/>
        <dbReference type="ChEBI" id="CHEBI:58435"/>
        <dbReference type="ChEBI" id="CHEBI:58525"/>
        <dbReference type="EC" id="5.3.1.16"/>
    </reaction>
</comment>
<comment type="pathway">
    <text evidence="1">Amino-acid biosynthesis; L-histidine biosynthesis; L-histidine from 5-phospho-alpha-D-ribose 1-diphosphate: step 4/9.</text>
</comment>
<comment type="subcellular location">
    <subcellularLocation>
        <location evidence="1">Cytoplasm</location>
    </subcellularLocation>
</comment>
<comment type="similarity">
    <text evidence="1">Belongs to the HisA/HisF family.</text>
</comment>
<evidence type="ECO:0000255" key="1">
    <source>
        <dbReference type="HAMAP-Rule" id="MF_01014"/>
    </source>
</evidence>
<organism>
    <name type="scientific">Methanosarcina acetivorans (strain ATCC 35395 / DSM 2834 / JCM 12185 / C2A)</name>
    <dbReference type="NCBI Taxonomy" id="188937"/>
    <lineage>
        <taxon>Archaea</taxon>
        <taxon>Methanobacteriati</taxon>
        <taxon>Methanobacteriota</taxon>
        <taxon>Stenosarchaea group</taxon>
        <taxon>Methanomicrobia</taxon>
        <taxon>Methanosarcinales</taxon>
        <taxon>Methanosarcinaceae</taxon>
        <taxon>Methanosarcina</taxon>
    </lineage>
</organism>
<sequence>MAFEVIPAVDMRGGKCVQLVQGVPGSEIVSLNDPLAVALDWIGKGAKTLHLVDLDGAIEGERKNAPIIEKIVQACREKGVSIQVGGGIRSFEDAASLLELGVSRIILGTAALQNPELVKQLSDAFGSSCVNVALDAKNGKISIKGWTEECAQTPVEMGREFEELGAGSLLFTNIDTEGLMQGVNPGPTRELVESVSIPVIASGGVSSLEDLKVLKQTGASGVVVGSALYTGRFTLEAAIETIRND</sequence>
<feature type="chain" id="PRO_0000142091" description="1-(5-phosphoribosyl)-5-[(5-phosphoribosylamino)methylideneamino] imidazole-4-carboxamide isomerase">
    <location>
        <begin position="1"/>
        <end position="245"/>
    </location>
</feature>
<feature type="active site" description="Proton acceptor" evidence="1">
    <location>
        <position position="10"/>
    </location>
</feature>
<feature type="active site" description="Proton donor" evidence="1">
    <location>
        <position position="135"/>
    </location>
</feature>
<name>HIS4_METAC</name>
<accession>Q8TU55</accession>
<protein>
    <recommendedName>
        <fullName evidence="1">1-(5-phosphoribosyl)-5-[(5-phosphoribosylamino)methylideneamino] imidazole-4-carboxamide isomerase</fullName>
        <ecNumber evidence="1">5.3.1.16</ecNumber>
    </recommendedName>
    <alternativeName>
        <fullName evidence="1">Phosphoribosylformimino-5-aminoimidazole carboxamide ribotide isomerase</fullName>
    </alternativeName>
</protein>
<proteinExistence type="inferred from homology"/>
<gene>
    <name evidence="1" type="primary">hisA</name>
    <name type="ordered locus">MA_0218</name>
</gene>
<dbReference type="EC" id="5.3.1.16" evidence="1"/>
<dbReference type="EMBL" id="AE010299">
    <property type="protein sequence ID" value="AAM03671.1"/>
    <property type="molecule type" value="Genomic_DNA"/>
</dbReference>
<dbReference type="RefSeq" id="WP_011020276.1">
    <property type="nucleotide sequence ID" value="NC_003552.1"/>
</dbReference>
<dbReference type="SMR" id="Q8TU55"/>
<dbReference type="FunCoup" id="Q8TU55">
    <property type="interactions" value="123"/>
</dbReference>
<dbReference type="STRING" id="188937.MA_0218"/>
<dbReference type="EnsemblBacteria" id="AAM03671">
    <property type="protein sequence ID" value="AAM03671"/>
    <property type="gene ID" value="MA_0218"/>
</dbReference>
<dbReference type="GeneID" id="1472110"/>
<dbReference type="KEGG" id="mac:MA_0218"/>
<dbReference type="HOGENOM" id="CLU_048577_1_1_2"/>
<dbReference type="InParanoid" id="Q8TU55"/>
<dbReference type="OrthoDB" id="52866at2157"/>
<dbReference type="PhylomeDB" id="Q8TU55"/>
<dbReference type="UniPathway" id="UPA00031">
    <property type="reaction ID" value="UER00009"/>
</dbReference>
<dbReference type="Proteomes" id="UP000002487">
    <property type="component" value="Chromosome"/>
</dbReference>
<dbReference type="GO" id="GO:0005737">
    <property type="term" value="C:cytoplasm"/>
    <property type="evidence" value="ECO:0000318"/>
    <property type="project" value="GO_Central"/>
</dbReference>
<dbReference type="GO" id="GO:0003949">
    <property type="term" value="F:1-(5-phosphoribosyl)-5-[(5-phosphoribosylamino)methylideneamino]imidazole-4-carboxamide isomerase activity"/>
    <property type="evidence" value="ECO:0000318"/>
    <property type="project" value="GO_Central"/>
</dbReference>
<dbReference type="GO" id="GO:0000105">
    <property type="term" value="P:L-histidine biosynthetic process"/>
    <property type="evidence" value="ECO:0000318"/>
    <property type="project" value="GO_Central"/>
</dbReference>
<dbReference type="CDD" id="cd04732">
    <property type="entry name" value="HisA"/>
    <property type="match status" value="1"/>
</dbReference>
<dbReference type="FunFam" id="3.20.20.70:FF:000009">
    <property type="entry name" value="1-(5-phosphoribosyl)-5-[(5-phosphoribosylamino)methylideneamino] imidazole-4-carboxamide isomerase"/>
    <property type="match status" value="1"/>
</dbReference>
<dbReference type="Gene3D" id="3.20.20.70">
    <property type="entry name" value="Aldolase class I"/>
    <property type="match status" value="1"/>
</dbReference>
<dbReference type="HAMAP" id="MF_01014">
    <property type="entry name" value="HisA"/>
    <property type="match status" value="1"/>
</dbReference>
<dbReference type="InterPro" id="IPR013785">
    <property type="entry name" value="Aldolase_TIM"/>
</dbReference>
<dbReference type="InterPro" id="IPR006062">
    <property type="entry name" value="His_biosynth"/>
</dbReference>
<dbReference type="InterPro" id="IPR006063">
    <property type="entry name" value="HisA_bact_arch"/>
</dbReference>
<dbReference type="InterPro" id="IPR044524">
    <property type="entry name" value="Isoase_HisA-like"/>
</dbReference>
<dbReference type="InterPro" id="IPR023016">
    <property type="entry name" value="Isoase_HisA-like_bact"/>
</dbReference>
<dbReference type="InterPro" id="IPR011060">
    <property type="entry name" value="RibuloseP-bd_barrel"/>
</dbReference>
<dbReference type="NCBIfam" id="TIGR00007">
    <property type="entry name" value="1-(5-phosphoribosyl)-5-[(5-phosphoribosylamino)methylideneamino]imidazole-4-carboxamide isomerase"/>
    <property type="match status" value="1"/>
</dbReference>
<dbReference type="NCBIfam" id="NF010112">
    <property type="entry name" value="PRK13585.1"/>
    <property type="match status" value="1"/>
</dbReference>
<dbReference type="PANTHER" id="PTHR43090">
    <property type="entry name" value="1-(5-PHOSPHORIBOSYL)-5-[(5-PHOSPHORIBOSYLAMINO)METHYLIDENEAMINO] IMIDAZOLE-4-CARBOXAMIDE ISOMERASE"/>
    <property type="match status" value="1"/>
</dbReference>
<dbReference type="PANTHER" id="PTHR43090:SF7">
    <property type="entry name" value="1-(5-PHOSPHORIBOSYL)-5-[(5-PHOSPHORIBOSYLAMINO)METHYLIDENEAMINO] IMIDAZOLE-4-CARBOXAMIDE ISOMERASE"/>
    <property type="match status" value="1"/>
</dbReference>
<dbReference type="Pfam" id="PF00977">
    <property type="entry name" value="His_biosynth"/>
    <property type="match status" value="1"/>
</dbReference>
<dbReference type="SUPFAM" id="SSF51366">
    <property type="entry name" value="Ribulose-phoshate binding barrel"/>
    <property type="match status" value="1"/>
</dbReference>
<reference key="1">
    <citation type="journal article" date="2002" name="Genome Res.">
        <title>The genome of Methanosarcina acetivorans reveals extensive metabolic and physiological diversity.</title>
        <authorList>
            <person name="Galagan J.E."/>
            <person name="Nusbaum C."/>
            <person name="Roy A."/>
            <person name="Endrizzi M.G."/>
            <person name="Macdonald P."/>
            <person name="FitzHugh W."/>
            <person name="Calvo S."/>
            <person name="Engels R."/>
            <person name="Smirnov S."/>
            <person name="Atnoor D."/>
            <person name="Brown A."/>
            <person name="Allen N."/>
            <person name="Naylor J."/>
            <person name="Stange-Thomann N."/>
            <person name="DeArellano K."/>
            <person name="Johnson R."/>
            <person name="Linton L."/>
            <person name="McEwan P."/>
            <person name="McKernan K."/>
            <person name="Talamas J."/>
            <person name="Tirrell A."/>
            <person name="Ye W."/>
            <person name="Zimmer A."/>
            <person name="Barber R.D."/>
            <person name="Cann I."/>
            <person name="Graham D.E."/>
            <person name="Grahame D.A."/>
            <person name="Guss A.M."/>
            <person name="Hedderich R."/>
            <person name="Ingram-Smith C."/>
            <person name="Kuettner H.C."/>
            <person name="Krzycki J.A."/>
            <person name="Leigh J.A."/>
            <person name="Li W."/>
            <person name="Liu J."/>
            <person name="Mukhopadhyay B."/>
            <person name="Reeve J.N."/>
            <person name="Smith K."/>
            <person name="Springer T.A."/>
            <person name="Umayam L.A."/>
            <person name="White O."/>
            <person name="White R.H."/>
            <person name="de Macario E.C."/>
            <person name="Ferry J.G."/>
            <person name="Jarrell K.F."/>
            <person name="Jing H."/>
            <person name="Macario A.J.L."/>
            <person name="Paulsen I.T."/>
            <person name="Pritchett M."/>
            <person name="Sowers K.R."/>
            <person name="Swanson R.V."/>
            <person name="Zinder S.H."/>
            <person name="Lander E."/>
            <person name="Metcalf W.W."/>
            <person name="Birren B."/>
        </authorList>
    </citation>
    <scope>NUCLEOTIDE SEQUENCE [LARGE SCALE GENOMIC DNA]</scope>
    <source>
        <strain>ATCC 35395 / DSM 2834 / JCM 12185 / C2A</strain>
    </source>
</reference>